<dbReference type="EMBL" id="U02303">
    <property type="protein sequence ID" value="AAC62155.1"/>
    <property type="molecule type" value="Genomic_DNA"/>
</dbReference>
<dbReference type="RefSeq" id="NP_047356.1">
    <property type="nucleotide sequence ID" value="NC_001954.1"/>
</dbReference>
<dbReference type="PDB" id="2X9A">
    <property type="method" value="X-ray"/>
    <property type="resolution" value="2.47 A"/>
    <property type="chains" value="A/C=17-81"/>
</dbReference>
<dbReference type="PDB" id="2X9B">
    <property type="method" value="X-ray"/>
    <property type="resolution" value="2.92 A"/>
    <property type="chains" value="A/B=17-81"/>
</dbReference>
<dbReference type="PDBsum" id="2X9A"/>
<dbReference type="PDBsum" id="2X9B"/>
<dbReference type="SMR" id="O80297"/>
<dbReference type="GeneID" id="1261855"/>
<dbReference type="KEGG" id="vg:1261855"/>
<dbReference type="OrthoDB" id="35339at10239"/>
<dbReference type="EvolutionaryTrace" id="O80297"/>
<dbReference type="Proteomes" id="UP000001833">
    <property type="component" value="Genome"/>
</dbReference>
<dbReference type="GO" id="GO:0033644">
    <property type="term" value="C:host cell membrane"/>
    <property type="evidence" value="ECO:0007669"/>
    <property type="project" value="UniProtKB-SubCell"/>
</dbReference>
<dbReference type="GO" id="GO:0016020">
    <property type="term" value="C:membrane"/>
    <property type="evidence" value="ECO:0007669"/>
    <property type="project" value="UniProtKB-KW"/>
</dbReference>
<dbReference type="GO" id="GO:0019028">
    <property type="term" value="C:viral capsid"/>
    <property type="evidence" value="ECO:0007669"/>
    <property type="project" value="UniProtKB-KW"/>
</dbReference>
<dbReference type="GO" id="GO:0098671">
    <property type="term" value="P:adhesion receptor-mediated virion attachment to host cell"/>
    <property type="evidence" value="ECO:0007669"/>
    <property type="project" value="UniProtKB-KW"/>
</dbReference>
<dbReference type="GO" id="GO:0098670">
    <property type="term" value="P:entry receptor-mediated virion attachment to host cell"/>
    <property type="evidence" value="ECO:0007669"/>
    <property type="project" value="UniProtKB-KW"/>
</dbReference>
<dbReference type="GO" id="GO:0099045">
    <property type="term" value="P:viral extrusion"/>
    <property type="evidence" value="ECO:0007669"/>
    <property type="project" value="UniProtKB-KW"/>
</dbReference>
<dbReference type="GO" id="GO:0039666">
    <property type="term" value="P:virion attachment to host cell pilus"/>
    <property type="evidence" value="ECO:0007669"/>
    <property type="project" value="UniProtKB-KW"/>
</dbReference>
<dbReference type="Gene3D" id="2.30.27.10">
    <property type="entry name" value="Phage FD Coat Protein,Membrane penetration domain"/>
    <property type="match status" value="1"/>
</dbReference>
<dbReference type="InterPro" id="IPR008021">
    <property type="entry name" value="Attachment_G3P_N"/>
</dbReference>
<dbReference type="InterPro" id="IPR036200">
    <property type="entry name" value="Attachment_G3P_N_sf"/>
</dbReference>
<dbReference type="Pfam" id="PF05357">
    <property type="entry name" value="Phage_Coat_A"/>
    <property type="match status" value="1"/>
</dbReference>
<dbReference type="SUPFAM" id="SSF50176">
    <property type="entry name" value="N-terminal domains of the minor coat protein g3p"/>
    <property type="match status" value="1"/>
</dbReference>
<feature type="signal peptide" evidence="3">
    <location>
        <begin position="1"/>
        <end position="16"/>
    </location>
</feature>
<feature type="chain" id="PRO_0000003291" description="Attachment protein G3P">
    <location>
        <begin position="17"/>
        <end position="460"/>
    </location>
</feature>
<feature type="transmembrane region" description="Helical" evidence="3">
    <location>
        <begin position="434"/>
        <end position="454"/>
    </location>
</feature>
<feature type="region of interest" description="N1" evidence="1">
    <location>
        <begin position="18"/>
        <end position="79"/>
    </location>
</feature>
<feature type="region of interest" description="Disordered" evidence="4">
    <location>
        <begin position="76"/>
        <end position="115"/>
    </location>
</feature>
<feature type="region of interest" description="G1 (Gly-rich linker)" evidence="1">
    <location>
        <begin position="80"/>
        <end position="100"/>
    </location>
</feature>
<feature type="region of interest" description="N2" evidence="2">
    <location>
        <begin position="184"/>
        <end position="249"/>
    </location>
</feature>
<feature type="region of interest" description="Disordered" evidence="4">
    <location>
        <begin position="277"/>
        <end position="300"/>
    </location>
</feature>
<feature type="region of interest" description="CT" evidence="1">
    <location>
        <begin position="306"/>
        <end position="460"/>
    </location>
</feature>
<feature type="compositionally biased region" description="Gly residues" evidence="4">
    <location>
        <begin position="80"/>
        <end position="95"/>
    </location>
</feature>
<feature type="compositionally biased region" description="Polar residues" evidence="4">
    <location>
        <begin position="102"/>
        <end position="115"/>
    </location>
</feature>
<feature type="compositionally biased region" description="Gly residues" evidence="4">
    <location>
        <begin position="279"/>
        <end position="300"/>
    </location>
</feature>
<feature type="disulfide bond" evidence="5 7 8">
    <location>
        <begin position="23"/>
        <end position="50"/>
    </location>
</feature>
<feature type="helix" evidence="9">
    <location>
        <begin position="20"/>
        <end position="24"/>
    </location>
</feature>
<feature type="strand" evidence="9">
    <location>
        <begin position="29"/>
        <end position="35"/>
    </location>
</feature>
<feature type="strand" evidence="9">
    <location>
        <begin position="37"/>
        <end position="39"/>
    </location>
</feature>
<feature type="strand" evidence="9">
    <location>
        <begin position="42"/>
        <end position="47"/>
    </location>
</feature>
<feature type="strand" evidence="9">
    <location>
        <begin position="50"/>
        <end position="61"/>
    </location>
</feature>
<feature type="turn" evidence="9">
    <location>
        <begin position="62"/>
        <end position="65"/>
    </location>
</feature>
<feature type="strand" evidence="9">
    <location>
        <begin position="66"/>
        <end position="76"/>
    </location>
</feature>
<protein>
    <recommendedName>
        <fullName>Attachment protein G3P</fullName>
    </recommendedName>
    <alternativeName>
        <fullName>Gene 3 protein</fullName>
        <shortName>G3P</shortName>
    </alternativeName>
    <alternativeName>
        <fullName>Minor coat protein</fullName>
    </alternativeName>
</protein>
<organismHost>
    <name type="scientific">Escherichia coli</name>
    <dbReference type="NCBI Taxonomy" id="562"/>
</organismHost>
<keyword id="KW-0002">3D-structure</keyword>
<keyword id="KW-0167">Capsid protein</keyword>
<keyword id="KW-1015">Disulfide bond</keyword>
<keyword id="KW-1043">Host membrane</keyword>
<keyword id="KW-0945">Host-virus interaction</keyword>
<keyword id="KW-0472">Membrane</keyword>
<keyword id="KW-1185">Reference proteome</keyword>
<keyword id="KW-0732">Signal</keyword>
<keyword id="KW-0812">Transmembrane</keyword>
<keyword id="KW-1133">Transmembrane helix</keyword>
<keyword id="KW-1233">Viral attachment to host adhesion receptor</keyword>
<keyword id="KW-1161">Viral attachment to host cell</keyword>
<keyword id="KW-1175">Viral attachment to host cell pilus</keyword>
<keyword id="KW-1234">Viral attachment to host entry receptor</keyword>
<keyword id="KW-1249">Viral extrusion</keyword>
<keyword id="KW-1162">Viral penetration into host cytoplasm</keyword>
<keyword id="KW-1241">Viral penetration into host cytoplasm via pilus retraction</keyword>
<keyword id="KW-1188">Viral release from host cell</keyword>
<keyword id="KW-0946">Virion</keyword>
<keyword id="KW-1160">Virus entry into host cell</keyword>
<evidence type="ECO:0000250" key="1">
    <source>
        <dbReference type="UniProtKB" id="P03661"/>
    </source>
</evidence>
<evidence type="ECO:0000250" key="2">
    <source>
        <dbReference type="UniProtKB" id="P03663"/>
    </source>
</evidence>
<evidence type="ECO:0000255" key="3"/>
<evidence type="ECO:0000256" key="4">
    <source>
        <dbReference type="SAM" id="MobiDB-lite"/>
    </source>
</evidence>
<evidence type="ECO:0000269" key="5">
    <source>
    </source>
</evidence>
<evidence type="ECO:0000305" key="6"/>
<evidence type="ECO:0007744" key="7">
    <source>
        <dbReference type="PDB" id="2X9A"/>
    </source>
</evidence>
<evidence type="ECO:0007744" key="8">
    <source>
        <dbReference type="PDB" id="2X9B"/>
    </source>
</evidence>
<evidence type="ECO:0007829" key="9">
    <source>
        <dbReference type="PDB" id="2X9A"/>
    </source>
</evidence>
<reference key="1">
    <citation type="submission" date="1993-10" db="EMBL/GenBank/DDBJ databases">
        <title>DNA sequence of the filamentous coliphage If1.</title>
        <authorList>
            <person name="Hill D.F."/>
            <person name="Hughes G."/>
            <person name="McNaughton J.C."/>
            <person name="Stockwell P.A."/>
            <person name="Petersen G.B."/>
        </authorList>
    </citation>
    <scope>NUCLEOTIDE SEQUENCE [GENOMIC DNA]</scope>
</reference>
<reference evidence="7 8" key="2">
    <citation type="journal article" date="2011" name="J. Mol. Biol.">
        <title>The filamentous phages fd and IF1 use different mechanisms to infect Escherichia coli.</title>
        <authorList>
            <person name="Lorenz S.H."/>
            <person name="Jakob R.P."/>
            <person name="Weininger U."/>
            <person name="Balbach J."/>
            <person name="Dobbek H."/>
            <person name="Schmid F.X."/>
        </authorList>
    </citation>
    <scope>X-RAY CRYSTALLOGRAPHY (2.47 ANGSTROMS) OF 17-81</scope>
    <scope>FUNCTION</scope>
    <scope>INTERACTION WITH THE I-PILUS</scope>
    <scope>DOMAIN</scope>
    <scope>DISULFIDE BOND</scope>
</reference>
<name>G3P_BPIF1</name>
<organism>
    <name type="scientific">Escherichia phage If1</name>
    <name type="common">Bacteriophage If1</name>
    <dbReference type="NCBI Taxonomy" id="10868"/>
    <lineage>
        <taxon>Viruses</taxon>
        <taxon>Monodnaviria</taxon>
        <taxon>Loebvirae</taxon>
        <taxon>Hofneiviricota</taxon>
        <taxon>Faserviricetes</taxon>
        <taxon>Tubulavirales</taxon>
        <taxon>Inoviridae</taxon>
        <taxon>Infulavirus</taxon>
        <taxon>Infulavirus If1</taxon>
    </lineage>
</organism>
<accession>O80297</accession>
<proteinExistence type="evidence at protein level"/>
<sequence length="460" mass="48790">MKKIIIALFFAPFFTHATTDAECLSKPAFDGTLSNVWKEGDSRYANFENCIYELSGIGIGYDNDTSCNGHWTPVRAADGSGNGGDDNSSGGGSNGDSGNNSTPDTVTPGQTVNLPSDLSTLSIPANVVKSDSIGSQFSLYTNASCTMCSGYYLSNNADSIAIANITETVKADYNQPDMWFEQTDSDGNHVKILQNSYKAVSYNVESKQSDVNNPTYINYSYSVNVKQVSYDTSNVCIMNWETFQNKCDASRAVLITDTVTPSYSRNITIQSNINYQGSNGSGGSGGSGGSGNDGGGTGNNGNGTGDFDYVKMANANKDALTESFDLSALQADTGASLDGSVQGTLDSLSGFSDSIGGLVGNGSAISGEFAGSSAAMNAIGEGDKSPLLDSLSFLKDGLFPALPEFKQCTPFVFAPGKEYEFIIECKYIDMFKGIFAFILYFWTFVTVYDSFSGILRKGRG</sequence>
<gene>
    <name type="primary">III</name>
</gene>
<comment type="function">
    <text evidence="1 5">Plays essential roles both in the penetration of the viral genome into the bacterial host via pilus retraction and in the extrusion process (By similarity). During the initial step of infection, G3P mediates adsorption of the phage to its primary receptor, the tip of host I-pilus (PubMed:21110981). Attachment of the phage causes pilus retraction bringing the viral particle into close proximity of the host cell inner membrane (By similarity). Subsequent interaction with the host entry receptors TolA and penetration of the viral DNA into the host cytoplasm (PubMed:21110981). In the extrusion process, G3P mediates the release of the membrane-anchored virion from the cell via its C-terminal domain (By similarity).</text>
</comment>
<comment type="subunit">
    <text evidence="1">Interacts with G6P; this interaction is required for proper integration of G3P and G6P into the virion (By similarity). Interacts with G8P. Interacts with the tip of the host pilus. Interacts (via N-terminus) with host TolA (By similarity).</text>
</comment>
<comment type="subcellular location">
    <subcellularLocation>
        <location evidence="6">Virion</location>
    </subcellularLocation>
    <subcellularLocation>
        <location evidence="6">Host membrane</location>
        <topology evidence="6">Single-pass type I membrane protein</topology>
    </subcellularLocation>
    <text>Prior to assembly, G3P is found associated with the bacterial host inner membrane. There are about five copies of this protein per mature phage that are located on the head side of the filamentous virion.</text>
</comment>
<comment type="domain">
    <text evidence="5">Consists of 3 domains (N1/D1, N2/D2, and CT) separated by glycine-rich repeats and a C-terminal transmembrane segment (PubMed:21110981). The N2 domain interacts with the I pilus, whereas the N1 domain forms a complex with the C-terminal domain of tolA (PubMed:21110981). The pilus and TolA binding domains are independent of each other in stability and folding (PubMed:21110981).</text>
</comment>
<comment type="similarity">
    <text evidence="6">Belongs to the inovirus G3P protein family.</text>
</comment>